<accession>A0LJ16</accession>
<feature type="chain" id="PRO_0000284608" description="Phosphonoacetaldehyde hydrolase-like protein">
    <location>
        <begin position="1"/>
        <end position="277"/>
    </location>
</feature>
<evidence type="ECO:0000305" key="1"/>
<protein>
    <recommendedName>
        <fullName>Phosphonoacetaldehyde hydrolase-like protein</fullName>
    </recommendedName>
</protein>
<organism>
    <name type="scientific">Syntrophobacter fumaroxidans (strain DSM 10017 / MPOB)</name>
    <dbReference type="NCBI Taxonomy" id="335543"/>
    <lineage>
        <taxon>Bacteria</taxon>
        <taxon>Pseudomonadati</taxon>
        <taxon>Thermodesulfobacteriota</taxon>
        <taxon>Syntrophobacteria</taxon>
        <taxon>Syntrophobacterales</taxon>
        <taxon>Syntrophobacteraceae</taxon>
        <taxon>Syntrophobacter</taxon>
    </lineage>
</organism>
<reference key="1">
    <citation type="submission" date="2006-10" db="EMBL/GenBank/DDBJ databases">
        <title>Complete sequence of Syntrophobacter fumaroxidans MPOB.</title>
        <authorList>
            <consortium name="US DOE Joint Genome Institute"/>
            <person name="Copeland A."/>
            <person name="Lucas S."/>
            <person name="Lapidus A."/>
            <person name="Barry K."/>
            <person name="Detter J.C."/>
            <person name="Glavina del Rio T."/>
            <person name="Hammon N."/>
            <person name="Israni S."/>
            <person name="Pitluck S."/>
            <person name="Goltsman E.G."/>
            <person name="Martinez M."/>
            <person name="Schmutz J."/>
            <person name="Larimer F."/>
            <person name="Land M."/>
            <person name="Hauser L."/>
            <person name="Kyrpides N."/>
            <person name="Kim E."/>
            <person name="Boone D.R."/>
            <person name="Brockman F."/>
            <person name="Culley D."/>
            <person name="Ferry J."/>
            <person name="Gunsalus R."/>
            <person name="McInerney M.J."/>
            <person name="Morrison M."/>
            <person name="Plugge C."/>
            <person name="Rohlin L."/>
            <person name="Scholten J."/>
            <person name="Sieber J."/>
            <person name="Stams A.J.M."/>
            <person name="Worm P."/>
            <person name="Henstra A.M."/>
            <person name="Richardson P."/>
        </authorList>
    </citation>
    <scope>NUCLEOTIDE SEQUENCE [LARGE SCALE GENOMIC DNA]</scope>
    <source>
        <strain>DSM 10017 / MPOB</strain>
    </source>
</reference>
<proteinExistence type="inferred from homology"/>
<gene>
    <name type="primary">phnX2</name>
    <name type="ordered locus">Sfum_1731</name>
</gene>
<comment type="similarity">
    <text evidence="1">Belongs to the HAD-like hydrolase superfamily. PhnX family.</text>
</comment>
<comment type="caution">
    <text evidence="1">Arg-61 is present instead of the conserved Lys which is expected to be an active site residue. The same site-directed mutant in B.cereus has no activity; therefore this protein is probably inactive.</text>
</comment>
<sequence>MEVFSRSNPYRGPVKGVVLDWAGTTVDYGCIGPLSVFVEVFRHNWVEVTIEEARAPMGLSREDHLRAMCRAESVARKWEDVHGAPPSEMDIGNMARMVEAHLAYTIAQHADLIPGVVEAVEALRGQGIRIGSSTGYTSDMMDMLVPAVEENGYRPDSIVCASDVPAGRPFPWMCYQNAINLEVYPMAAMVKIGDTVADIREGLNAGMWTIGLTLTGNELGLSEEEVAAMDPEELRRRMDNIEQRFRNAGAHFVAQGLRDCPAVIRDINELLAGGERP</sequence>
<name>PHNXL_SYNFM</name>
<dbReference type="EMBL" id="CP000478">
    <property type="protein sequence ID" value="ABK17418.1"/>
    <property type="molecule type" value="Genomic_DNA"/>
</dbReference>
<dbReference type="RefSeq" id="WP_011698588.1">
    <property type="nucleotide sequence ID" value="NC_008554.1"/>
</dbReference>
<dbReference type="SMR" id="A0LJ16"/>
<dbReference type="STRING" id="335543.Sfum_1731"/>
<dbReference type="KEGG" id="sfu:Sfum_1731"/>
<dbReference type="eggNOG" id="COG0637">
    <property type="taxonomic scope" value="Bacteria"/>
</dbReference>
<dbReference type="HOGENOM" id="CLU_045011_12_0_7"/>
<dbReference type="InParanoid" id="A0LJ16"/>
<dbReference type="OrthoDB" id="5504491at2"/>
<dbReference type="Proteomes" id="UP000001784">
    <property type="component" value="Chromosome"/>
</dbReference>
<dbReference type="GO" id="GO:0005829">
    <property type="term" value="C:cytosol"/>
    <property type="evidence" value="ECO:0007669"/>
    <property type="project" value="TreeGrafter"/>
</dbReference>
<dbReference type="GO" id="GO:0008967">
    <property type="term" value="F:phosphoglycolate phosphatase activity"/>
    <property type="evidence" value="ECO:0007669"/>
    <property type="project" value="TreeGrafter"/>
</dbReference>
<dbReference type="GO" id="GO:0050194">
    <property type="term" value="F:phosphonoacetaldehyde hydrolase activity"/>
    <property type="evidence" value="ECO:0007669"/>
    <property type="project" value="InterPro"/>
</dbReference>
<dbReference type="GO" id="GO:0006281">
    <property type="term" value="P:DNA repair"/>
    <property type="evidence" value="ECO:0007669"/>
    <property type="project" value="TreeGrafter"/>
</dbReference>
<dbReference type="GO" id="GO:0019700">
    <property type="term" value="P:organic phosphonate catabolic process"/>
    <property type="evidence" value="ECO:0007669"/>
    <property type="project" value="InterPro"/>
</dbReference>
<dbReference type="CDD" id="cd02586">
    <property type="entry name" value="HAD_PHN"/>
    <property type="match status" value="1"/>
</dbReference>
<dbReference type="Gene3D" id="3.40.50.1000">
    <property type="entry name" value="HAD superfamily/HAD-like"/>
    <property type="match status" value="1"/>
</dbReference>
<dbReference type="Gene3D" id="1.10.150.240">
    <property type="entry name" value="Putative phosphatase, domain 2"/>
    <property type="match status" value="1"/>
</dbReference>
<dbReference type="HAMAP" id="MF_01375">
    <property type="entry name" value="PhnX"/>
    <property type="match status" value="1"/>
</dbReference>
<dbReference type="InterPro" id="IPR050155">
    <property type="entry name" value="HAD-like_hydrolase_sf"/>
</dbReference>
<dbReference type="InterPro" id="IPR036412">
    <property type="entry name" value="HAD-like_sf"/>
</dbReference>
<dbReference type="InterPro" id="IPR023214">
    <property type="entry name" value="HAD_sf"/>
</dbReference>
<dbReference type="InterPro" id="IPR023198">
    <property type="entry name" value="PGP-like_dom2"/>
</dbReference>
<dbReference type="InterPro" id="IPR006323">
    <property type="entry name" value="Phosphonoacetald_hydro"/>
</dbReference>
<dbReference type="NCBIfam" id="TIGR01422">
    <property type="entry name" value="phosphonatase"/>
    <property type="match status" value="1"/>
</dbReference>
<dbReference type="PANTHER" id="PTHR43434">
    <property type="entry name" value="PHOSPHOGLYCOLATE PHOSPHATASE"/>
    <property type="match status" value="1"/>
</dbReference>
<dbReference type="PANTHER" id="PTHR43434:SF19">
    <property type="entry name" value="PHOSPHONOACETALDEHYDE HYDROLASE"/>
    <property type="match status" value="1"/>
</dbReference>
<dbReference type="Pfam" id="PF00702">
    <property type="entry name" value="Hydrolase"/>
    <property type="match status" value="1"/>
</dbReference>
<dbReference type="SFLD" id="SFLDG01135">
    <property type="entry name" value="C1.5.6:_HAD__Beta-PGM__Phospha"/>
    <property type="match status" value="1"/>
</dbReference>
<dbReference type="SFLD" id="SFLDG01129">
    <property type="entry name" value="C1.5:_HAD__Beta-PGM__Phosphata"/>
    <property type="match status" value="1"/>
</dbReference>
<dbReference type="SUPFAM" id="SSF56784">
    <property type="entry name" value="HAD-like"/>
    <property type="match status" value="1"/>
</dbReference>
<keyword id="KW-1185">Reference proteome</keyword>